<evidence type="ECO:0000255" key="1">
    <source>
        <dbReference type="HAMAP-Rule" id="MF_00255"/>
    </source>
</evidence>
<sequence length="688" mass="75140">MNFENLLIELGTEELPPKALRKLAESFLANFTEELTKADLAFKSAVWYAAPRRLAINVTELAIAQADKIVEKRGPAVSSAFDAEGKPTKAAEGWARGNGITVDQAERLVTDKGEWLVYNAKVEGVETKSLIAAMAQRALDKLPIPKPMRWGSSKTQFIRPVHTATMLLGSELIEGELLGIKSARNVRGHRFMGTGFELDHADNYLTLLKEKGKVIADYESRKALIKADAEKAAAKIGGTADIEDDLLEEVTSLVEWPVVLTASFEEKFLNVPSEALVYTMKGDQKYFPVFDEAGKLLPNFIFVANIESKDPAQIIAGNEKVVRPRLADAEFFFNTDKKHTLESRLPSLETVLFQQQLGTLKDKVTRISALAAFIAEQTGANAVDAARAGLLSKTDLMTNMVMEFTDTQGTMGMHYARLDGETEAVALAMEEQYKPKFSGDTVPTAAVSCAVALADKLDTLVGIFGIGQAPKGAADPFALRRAAIGVLRIIVENKLPLDLVTLIAKAQELHGTNLSNANASDEVLEFLMARFRAWYQDKGIDVDVILAVLARRPTRPADFDSRINAVSHFRSLEASSALAAANKRVSNILAKVEGELPTAINSALLAEAAEQALAAKLAELQPQLAPLFANADYQQALTLLSSLRESVDQFFEDVMVMADDEALKNNRLALLNNLREQFLHVADISLLQ</sequence>
<accession>Q0HPC7</accession>
<feature type="chain" id="PRO_1000006408" description="Glycine--tRNA ligase beta subunit">
    <location>
        <begin position="1"/>
        <end position="688"/>
    </location>
</feature>
<reference key="1">
    <citation type="submission" date="2006-08" db="EMBL/GenBank/DDBJ databases">
        <title>Complete sequence of Shewanella sp. MR-4.</title>
        <authorList>
            <consortium name="US DOE Joint Genome Institute"/>
            <person name="Copeland A."/>
            <person name="Lucas S."/>
            <person name="Lapidus A."/>
            <person name="Barry K."/>
            <person name="Detter J.C."/>
            <person name="Glavina del Rio T."/>
            <person name="Hammon N."/>
            <person name="Israni S."/>
            <person name="Dalin E."/>
            <person name="Tice H."/>
            <person name="Pitluck S."/>
            <person name="Kiss H."/>
            <person name="Brettin T."/>
            <person name="Bruce D."/>
            <person name="Han C."/>
            <person name="Tapia R."/>
            <person name="Gilna P."/>
            <person name="Schmutz J."/>
            <person name="Larimer F."/>
            <person name="Land M."/>
            <person name="Hauser L."/>
            <person name="Kyrpides N."/>
            <person name="Mikhailova N."/>
            <person name="Nealson K."/>
            <person name="Konstantinidis K."/>
            <person name="Klappenbach J."/>
            <person name="Tiedje J."/>
            <person name="Richardson P."/>
        </authorList>
    </citation>
    <scope>NUCLEOTIDE SEQUENCE [LARGE SCALE GENOMIC DNA]</scope>
    <source>
        <strain>MR-4</strain>
    </source>
</reference>
<dbReference type="EC" id="6.1.1.14" evidence="1"/>
<dbReference type="EMBL" id="CP000446">
    <property type="protein sequence ID" value="ABI37090.1"/>
    <property type="molecule type" value="Genomic_DNA"/>
</dbReference>
<dbReference type="RefSeq" id="WP_011620845.1">
    <property type="nucleotide sequence ID" value="NC_008321.1"/>
</dbReference>
<dbReference type="SMR" id="Q0HPC7"/>
<dbReference type="KEGG" id="she:Shewmr4_0008"/>
<dbReference type="HOGENOM" id="CLU_007220_2_2_6"/>
<dbReference type="GO" id="GO:0005829">
    <property type="term" value="C:cytosol"/>
    <property type="evidence" value="ECO:0007669"/>
    <property type="project" value="TreeGrafter"/>
</dbReference>
<dbReference type="GO" id="GO:0004814">
    <property type="term" value="F:arginine-tRNA ligase activity"/>
    <property type="evidence" value="ECO:0007669"/>
    <property type="project" value="InterPro"/>
</dbReference>
<dbReference type="GO" id="GO:0005524">
    <property type="term" value="F:ATP binding"/>
    <property type="evidence" value="ECO:0007669"/>
    <property type="project" value="UniProtKB-UniRule"/>
</dbReference>
<dbReference type="GO" id="GO:0004820">
    <property type="term" value="F:glycine-tRNA ligase activity"/>
    <property type="evidence" value="ECO:0007669"/>
    <property type="project" value="UniProtKB-UniRule"/>
</dbReference>
<dbReference type="GO" id="GO:0006420">
    <property type="term" value="P:arginyl-tRNA aminoacylation"/>
    <property type="evidence" value="ECO:0007669"/>
    <property type="project" value="InterPro"/>
</dbReference>
<dbReference type="GO" id="GO:0006426">
    <property type="term" value="P:glycyl-tRNA aminoacylation"/>
    <property type="evidence" value="ECO:0007669"/>
    <property type="project" value="UniProtKB-UniRule"/>
</dbReference>
<dbReference type="Gene3D" id="1.10.730.10">
    <property type="entry name" value="Isoleucyl-tRNA Synthetase, Domain 1"/>
    <property type="match status" value="1"/>
</dbReference>
<dbReference type="HAMAP" id="MF_00255">
    <property type="entry name" value="Gly_tRNA_synth_beta"/>
    <property type="match status" value="1"/>
</dbReference>
<dbReference type="InterPro" id="IPR008909">
    <property type="entry name" value="DALR_anticod-bd"/>
</dbReference>
<dbReference type="InterPro" id="IPR015944">
    <property type="entry name" value="Gly-tRNA-synth_bsu"/>
</dbReference>
<dbReference type="InterPro" id="IPR006194">
    <property type="entry name" value="Gly-tRNA-synth_heterodimer"/>
</dbReference>
<dbReference type="NCBIfam" id="TIGR00211">
    <property type="entry name" value="glyS"/>
    <property type="match status" value="1"/>
</dbReference>
<dbReference type="PANTHER" id="PTHR30075:SF2">
    <property type="entry name" value="GLYCINE--TRNA LIGASE, CHLOROPLASTIC_MITOCHONDRIAL 2"/>
    <property type="match status" value="1"/>
</dbReference>
<dbReference type="PANTHER" id="PTHR30075">
    <property type="entry name" value="GLYCYL-TRNA SYNTHETASE"/>
    <property type="match status" value="1"/>
</dbReference>
<dbReference type="Pfam" id="PF05746">
    <property type="entry name" value="DALR_1"/>
    <property type="match status" value="1"/>
</dbReference>
<dbReference type="Pfam" id="PF02092">
    <property type="entry name" value="tRNA_synt_2f"/>
    <property type="match status" value="1"/>
</dbReference>
<dbReference type="PRINTS" id="PR01045">
    <property type="entry name" value="TRNASYNTHGB"/>
</dbReference>
<dbReference type="SMART" id="SM00836">
    <property type="entry name" value="DALR_1"/>
    <property type="match status" value="1"/>
</dbReference>
<dbReference type="SUPFAM" id="SSF109604">
    <property type="entry name" value="HD-domain/PDEase-like"/>
    <property type="match status" value="1"/>
</dbReference>
<dbReference type="PROSITE" id="PS50861">
    <property type="entry name" value="AA_TRNA_LIGASE_II_GLYAB"/>
    <property type="match status" value="1"/>
</dbReference>
<keyword id="KW-0030">Aminoacyl-tRNA synthetase</keyword>
<keyword id="KW-0067">ATP-binding</keyword>
<keyword id="KW-0963">Cytoplasm</keyword>
<keyword id="KW-0436">Ligase</keyword>
<keyword id="KW-0547">Nucleotide-binding</keyword>
<keyword id="KW-0648">Protein biosynthesis</keyword>
<proteinExistence type="inferred from homology"/>
<comment type="catalytic activity">
    <reaction evidence="1">
        <text>tRNA(Gly) + glycine + ATP = glycyl-tRNA(Gly) + AMP + diphosphate</text>
        <dbReference type="Rhea" id="RHEA:16013"/>
        <dbReference type="Rhea" id="RHEA-COMP:9664"/>
        <dbReference type="Rhea" id="RHEA-COMP:9683"/>
        <dbReference type="ChEBI" id="CHEBI:30616"/>
        <dbReference type="ChEBI" id="CHEBI:33019"/>
        <dbReference type="ChEBI" id="CHEBI:57305"/>
        <dbReference type="ChEBI" id="CHEBI:78442"/>
        <dbReference type="ChEBI" id="CHEBI:78522"/>
        <dbReference type="ChEBI" id="CHEBI:456215"/>
        <dbReference type="EC" id="6.1.1.14"/>
    </reaction>
</comment>
<comment type="subunit">
    <text evidence="1">Tetramer of two alpha and two beta subunits.</text>
</comment>
<comment type="subcellular location">
    <subcellularLocation>
        <location evidence="1">Cytoplasm</location>
    </subcellularLocation>
</comment>
<comment type="similarity">
    <text evidence="1">Belongs to the class-II aminoacyl-tRNA synthetase family.</text>
</comment>
<protein>
    <recommendedName>
        <fullName evidence="1">Glycine--tRNA ligase beta subunit</fullName>
        <ecNumber evidence="1">6.1.1.14</ecNumber>
    </recommendedName>
    <alternativeName>
        <fullName evidence="1">Glycyl-tRNA synthetase beta subunit</fullName>
        <shortName evidence="1">GlyRS</shortName>
    </alternativeName>
</protein>
<name>SYGB_SHESM</name>
<organism>
    <name type="scientific">Shewanella sp. (strain MR-4)</name>
    <dbReference type="NCBI Taxonomy" id="60480"/>
    <lineage>
        <taxon>Bacteria</taxon>
        <taxon>Pseudomonadati</taxon>
        <taxon>Pseudomonadota</taxon>
        <taxon>Gammaproteobacteria</taxon>
        <taxon>Alteromonadales</taxon>
        <taxon>Shewanellaceae</taxon>
        <taxon>Shewanella</taxon>
    </lineage>
</organism>
<gene>
    <name evidence="1" type="primary">glyS</name>
    <name type="ordered locus">Shewmr4_0008</name>
</gene>